<gene>
    <name type="primary">PRM1</name>
</gene>
<organism>
    <name type="scientific">Planigale ingrami</name>
    <name type="common">Long-tailed planigale</name>
    <dbReference type="NCBI Taxonomy" id="34895"/>
    <lineage>
        <taxon>Eukaryota</taxon>
        <taxon>Metazoa</taxon>
        <taxon>Chordata</taxon>
        <taxon>Craniata</taxon>
        <taxon>Vertebrata</taxon>
        <taxon>Euteleostomi</taxon>
        <taxon>Mammalia</taxon>
        <taxon>Metatheria</taxon>
        <taxon>Dasyuromorphia</taxon>
        <taxon>Dasyuridae</taxon>
        <taxon>Planigale</taxon>
    </lineage>
</organism>
<proteinExistence type="evidence at transcript level"/>
<protein>
    <recommendedName>
        <fullName>Sperm protamine P1</fullName>
    </recommendedName>
</protein>
<comment type="function">
    <text>Protamines substitute for histones in the chromatin of sperm during the haploid phase of spermatogenesis. They compact sperm DNA into a highly condensed, stable and inactive complex.</text>
</comment>
<comment type="subcellular location">
    <subcellularLocation>
        <location>Nucleus</location>
    </subcellularLocation>
    <subcellularLocation>
        <location>Chromosome</location>
    </subcellularLocation>
</comment>
<comment type="tissue specificity">
    <text>Testis.</text>
</comment>
<comment type="similarity">
    <text evidence="2">Belongs to the protamine P1 family.</text>
</comment>
<dbReference type="EMBL" id="L32753">
    <property type="protein sequence ID" value="AAA99477.1"/>
    <property type="molecule type" value="Genomic_DNA"/>
</dbReference>
<dbReference type="EMBL" id="L32745">
    <property type="protein sequence ID" value="AAA99477.1"/>
    <property type="status" value="JOINED"/>
    <property type="molecule type" value="Genomic_DNA"/>
</dbReference>
<dbReference type="GO" id="GO:0000786">
    <property type="term" value="C:nucleosome"/>
    <property type="evidence" value="ECO:0007669"/>
    <property type="project" value="UniProtKB-KW"/>
</dbReference>
<dbReference type="GO" id="GO:0005634">
    <property type="term" value="C:nucleus"/>
    <property type="evidence" value="ECO:0007669"/>
    <property type="project" value="UniProtKB-SubCell"/>
</dbReference>
<dbReference type="GO" id="GO:0003677">
    <property type="term" value="F:DNA binding"/>
    <property type="evidence" value="ECO:0007669"/>
    <property type="project" value="UniProtKB-KW"/>
</dbReference>
<dbReference type="GO" id="GO:0030154">
    <property type="term" value="P:cell differentiation"/>
    <property type="evidence" value="ECO:0007669"/>
    <property type="project" value="UniProtKB-KW"/>
</dbReference>
<dbReference type="GO" id="GO:0030261">
    <property type="term" value="P:chromosome condensation"/>
    <property type="evidence" value="ECO:0007669"/>
    <property type="project" value="UniProtKB-KW"/>
</dbReference>
<dbReference type="GO" id="GO:0007283">
    <property type="term" value="P:spermatogenesis"/>
    <property type="evidence" value="ECO:0007669"/>
    <property type="project" value="UniProtKB-KW"/>
</dbReference>
<sequence>MARSRRHSRSRSRSRNQCQRRRRRTYNRRRTMREKPRHSRRRRVRRRGCSCRRCSRRRRRRC</sequence>
<name>HSP1_PLAIN</name>
<keyword id="KW-0158">Chromosome</keyword>
<keyword id="KW-0217">Developmental protein</keyword>
<keyword id="KW-0221">Differentiation</keyword>
<keyword id="KW-0226">DNA condensation</keyword>
<keyword id="KW-0238">DNA-binding</keyword>
<keyword id="KW-0544">Nucleosome core</keyword>
<keyword id="KW-0539">Nucleus</keyword>
<keyword id="KW-0744">Spermatogenesis</keyword>
<reference key="1">
    <citation type="journal article" date="1995" name="Proc. R. Soc. B">
        <title>Molecular phylogeny and evolution of marsupial protamine P1 genes.</title>
        <authorList>
            <person name="Retief J.D."/>
            <person name="Krajewski C."/>
            <person name="Westerman M."/>
            <person name="Winkfein R.J."/>
            <person name="Dixon G.H."/>
        </authorList>
    </citation>
    <scope>NUCLEOTIDE SEQUENCE [GENOMIC DNA]</scope>
    <source>
        <tissue>Sperm</tissue>
    </source>
</reference>
<evidence type="ECO:0000256" key="1">
    <source>
        <dbReference type="SAM" id="MobiDB-lite"/>
    </source>
</evidence>
<evidence type="ECO:0000305" key="2"/>
<feature type="chain" id="PRO_0000191534" description="Sperm protamine P1">
    <location>
        <begin position="1"/>
        <end position="62"/>
    </location>
</feature>
<feature type="region of interest" description="Disordered" evidence="1">
    <location>
        <begin position="1"/>
        <end position="62"/>
    </location>
</feature>
<accession>P42148</accession>